<evidence type="ECO:0000255" key="1">
    <source>
        <dbReference type="PROSITE-ProRule" id="PRU00977"/>
    </source>
</evidence>
<evidence type="ECO:0000305" key="2"/>
<sequence length="82" mass="9680">MDKHFVYIVKCNDGSLYTGYAKDVNARVIKHNNGKGAKYTKIRRPVELVYQETYTTKSEALKREYEIKTYTRQQKLKMIQEG</sequence>
<reference key="1">
    <citation type="journal article" date="2005" name="J. Bacteriol.">
        <title>Insights on evolution of virulence and resistance from the complete genome analysis of an early methicillin-resistant Staphylococcus aureus strain and a biofilm-producing methicillin-resistant Staphylococcus epidermidis strain.</title>
        <authorList>
            <person name="Gill S.R."/>
            <person name="Fouts D.E."/>
            <person name="Archer G.L."/>
            <person name="Mongodin E.F."/>
            <person name="DeBoy R.T."/>
            <person name="Ravel J."/>
            <person name="Paulsen I.T."/>
            <person name="Kolonay J.F."/>
            <person name="Brinkac L.M."/>
            <person name="Beanan M.J."/>
            <person name="Dodson R.J."/>
            <person name="Daugherty S.C."/>
            <person name="Madupu R."/>
            <person name="Angiuoli S.V."/>
            <person name="Durkin A.S."/>
            <person name="Haft D.H."/>
            <person name="Vamathevan J.J."/>
            <person name="Khouri H."/>
            <person name="Utterback T.R."/>
            <person name="Lee C."/>
            <person name="Dimitrov G."/>
            <person name="Jiang L."/>
            <person name="Qin H."/>
            <person name="Weidman J."/>
            <person name="Tran K."/>
            <person name="Kang K.H."/>
            <person name="Hance I.R."/>
            <person name="Nelson K.E."/>
            <person name="Fraser C.M."/>
        </authorList>
    </citation>
    <scope>NUCLEOTIDE SEQUENCE [LARGE SCALE GENOMIC DNA]</scope>
    <source>
        <strain>ATCC 35984 / DSM 28319 / BCRC 17069 / CCUG 31568 / BM 3577 / RP62A</strain>
    </source>
</reference>
<comment type="similarity">
    <text evidence="2">Belongs to the UPF0213 family.</text>
</comment>
<accession>Q5HRR7</accession>
<keyword id="KW-1185">Reference proteome</keyword>
<protein>
    <recommendedName>
        <fullName>UPF0213 protein SERP0126</fullName>
    </recommendedName>
</protein>
<proteinExistence type="inferred from homology"/>
<dbReference type="EMBL" id="CP000029">
    <property type="protein sequence ID" value="AAW53471.1"/>
    <property type="molecule type" value="Genomic_DNA"/>
</dbReference>
<dbReference type="RefSeq" id="WP_001832208.1">
    <property type="nucleotide sequence ID" value="NC_002976.3"/>
</dbReference>
<dbReference type="SMR" id="Q5HRR7"/>
<dbReference type="STRING" id="176279.SERP0126"/>
<dbReference type="KEGG" id="ser:SERP0126"/>
<dbReference type="eggNOG" id="COG2827">
    <property type="taxonomic scope" value="Bacteria"/>
</dbReference>
<dbReference type="HOGENOM" id="CLU_135650_0_3_9"/>
<dbReference type="Proteomes" id="UP000000531">
    <property type="component" value="Chromosome"/>
</dbReference>
<dbReference type="CDD" id="cd10456">
    <property type="entry name" value="GIY-YIG_UPF0213"/>
    <property type="match status" value="1"/>
</dbReference>
<dbReference type="Gene3D" id="3.40.1440.10">
    <property type="entry name" value="GIY-YIG endonuclease"/>
    <property type="match status" value="1"/>
</dbReference>
<dbReference type="InterPro" id="IPR000305">
    <property type="entry name" value="GIY-YIG_endonuc"/>
</dbReference>
<dbReference type="InterPro" id="IPR035901">
    <property type="entry name" value="GIY-YIG_endonuc_sf"/>
</dbReference>
<dbReference type="InterPro" id="IPR050190">
    <property type="entry name" value="UPF0213_domain"/>
</dbReference>
<dbReference type="PANTHER" id="PTHR34477">
    <property type="entry name" value="UPF0213 PROTEIN YHBQ"/>
    <property type="match status" value="1"/>
</dbReference>
<dbReference type="PANTHER" id="PTHR34477:SF1">
    <property type="entry name" value="UPF0213 PROTEIN YHBQ"/>
    <property type="match status" value="1"/>
</dbReference>
<dbReference type="Pfam" id="PF01541">
    <property type="entry name" value="GIY-YIG"/>
    <property type="match status" value="1"/>
</dbReference>
<dbReference type="SMART" id="SM00465">
    <property type="entry name" value="GIYc"/>
    <property type="match status" value="1"/>
</dbReference>
<dbReference type="SUPFAM" id="SSF82771">
    <property type="entry name" value="GIY-YIG endonuclease"/>
    <property type="match status" value="1"/>
</dbReference>
<dbReference type="PROSITE" id="PS50164">
    <property type="entry name" value="GIY_YIG"/>
    <property type="match status" value="1"/>
</dbReference>
<name>Y126_STAEQ</name>
<gene>
    <name type="ordered locus">SERP0126</name>
</gene>
<organism>
    <name type="scientific">Staphylococcus epidermidis (strain ATCC 35984 / DSM 28319 / BCRC 17069 / CCUG 31568 / BM 3577 / RP62A)</name>
    <dbReference type="NCBI Taxonomy" id="176279"/>
    <lineage>
        <taxon>Bacteria</taxon>
        <taxon>Bacillati</taxon>
        <taxon>Bacillota</taxon>
        <taxon>Bacilli</taxon>
        <taxon>Bacillales</taxon>
        <taxon>Staphylococcaceae</taxon>
        <taxon>Staphylococcus</taxon>
    </lineage>
</organism>
<feature type="chain" id="PRO_0000161387" description="UPF0213 protein SERP0126">
    <location>
        <begin position="1"/>
        <end position="82"/>
    </location>
</feature>
<feature type="domain" description="GIY-YIG" evidence="1">
    <location>
        <begin position="2"/>
        <end position="77"/>
    </location>
</feature>